<protein>
    <recommendedName>
        <fullName>Flagellar secretion chaperone FliS</fullName>
    </recommendedName>
</protein>
<reference key="1">
    <citation type="journal article" date="1992" name="J. Gen. Microbiol.">
        <title>Subdivision of flagellar region III of the Escherichia coli and Salmonella typhimurium chromosomes and identification of two additional flagellar genes.</title>
        <authorList>
            <person name="Kawagishi I."/>
            <person name="Mueller V."/>
            <person name="Williams A.W."/>
            <person name="Irikura V.M."/>
            <person name="Macnab R.M."/>
        </authorList>
    </citation>
    <scope>NUCLEOTIDE SEQUENCE [GENOMIC DNA]</scope>
    <source>
        <strain>SJW1103</strain>
    </source>
</reference>
<reference key="2">
    <citation type="journal article" date="2001" name="Nature">
        <title>Complete genome sequence of Salmonella enterica serovar Typhimurium LT2.</title>
        <authorList>
            <person name="McClelland M."/>
            <person name="Sanderson K.E."/>
            <person name="Spieth J."/>
            <person name="Clifton S.W."/>
            <person name="Latreille P."/>
            <person name="Courtney L."/>
            <person name="Porwollik S."/>
            <person name="Ali J."/>
            <person name="Dante M."/>
            <person name="Du F."/>
            <person name="Hou S."/>
            <person name="Layman D."/>
            <person name="Leonard S."/>
            <person name="Nguyen C."/>
            <person name="Scott K."/>
            <person name="Holmes A."/>
            <person name="Grewal N."/>
            <person name="Mulvaney E."/>
            <person name="Ryan E."/>
            <person name="Sun H."/>
            <person name="Florea L."/>
            <person name="Miller W."/>
            <person name="Stoneking T."/>
            <person name="Nhan M."/>
            <person name="Waterston R."/>
            <person name="Wilson R.K."/>
        </authorList>
    </citation>
    <scope>NUCLEOTIDE SEQUENCE [LARGE SCALE GENOMIC DNA]</scope>
    <source>
        <strain>LT2 / SGSC1412 / ATCC 700720</strain>
    </source>
</reference>
<comment type="interaction">
    <interactant intactId="EBI-2011519">
        <id>P26609</id>
    </interactant>
    <interactant intactId="EBI-10687647">
        <id>P26477</id>
        <label>flgM</label>
    </interactant>
    <organismsDiffer>false</organismsDiffer>
    <experiments>6</experiments>
</comment>
<comment type="interaction">
    <interactant intactId="EBI-2011519">
        <id>P26609</id>
    </interactant>
    <interactant intactId="EBI-2011501">
        <id>P06179</id>
        <label>fliC</label>
    </interactant>
    <organismsDiffer>false</organismsDiffer>
    <experiments>6</experiments>
</comment>
<comment type="subcellular location">
    <subcellularLocation>
        <location evidence="1">Cytoplasm</location>
        <location evidence="1">Cytosol</location>
    </subcellularLocation>
</comment>
<comment type="similarity">
    <text evidence="1">Belongs to the FliS family.</text>
</comment>
<name>FLIS_SALTY</name>
<sequence length="135" mass="14687">MYTASGIKAYAQVSVESAVMSASPHQLIEMLFDGANSALVRARLFLEQGDVVAKGEALSKAINIIDNGLKAGLDQEKGGEIATNLSELYDYMIRRLLQANLRNDAQAIEEVEGLLSNIAEAWKQISPKASFQESR</sequence>
<feature type="chain" id="PRO_0000180969" description="Flagellar secretion chaperone FliS">
    <location>
        <begin position="1"/>
        <end position="135"/>
    </location>
</feature>
<feature type="helix" evidence="2">
    <location>
        <begin position="7"/>
        <end position="19"/>
    </location>
</feature>
<feature type="helix" evidence="2">
    <location>
        <begin position="24"/>
        <end position="48"/>
    </location>
</feature>
<feature type="helix" evidence="2">
    <location>
        <begin position="51"/>
        <end position="67"/>
    </location>
</feature>
<feature type="turn" evidence="2">
    <location>
        <begin position="68"/>
        <end position="72"/>
    </location>
</feature>
<feature type="helix" evidence="2">
    <location>
        <begin position="75"/>
        <end position="78"/>
    </location>
</feature>
<feature type="helix" evidence="2">
    <location>
        <begin position="80"/>
        <end position="102"/>
    </location>
</feature>
<feature type="helix" evidence="2">
    <location>
        <begin position="105"/>
        <end position="123"/>
    </location>
</feature>
<gene>
    <name type="primary">fliS</name>
    <name type="ordered locus">STM1961</name>
</gene>
<evidence type="ECO:0000305" key="1"/>
<evidence type="ECO:0007829" key="2">
    <source>
        <dbReference type="PDB" id="6CH3"/>
    </source>
</evidence>
<keyword id="KW-0002">3D-structure</keyword>
<keyword id="KW-1005">Bacterial flagellum biogenesis</keyword>
<keyword id="KW-0143">Chaperone</keyword>
<keyword id="KW-0963">Cytoplasm</keyword>
<keyword id="KW-1185">Reference proteome</keyword>
<organism>
    <name type="scientific">Salmonella typhimurium (strain LT2 / SGSC1412 / ATCC 700720)</name>
    <dbReference type="NCBI Taxonomy" id="99287"/>
    <lineage>
        <taxon>Bacteria</taxon>
        <taxon>Pseudomonadati</taxon>
        <taxon>Pseudomonadota</taxon>
        <taxon>Gammaproteobacteria</taxon>
        <taxon>Enterobacterales</taxon>
        <taxon>Enterobacteriaceae</taxon>
        <taxon>Salmonella</taxon>
    </lineage>
</organism>
<accession>P26609</accession>
<proteinExistence type="evidence at protein level"/>
<dbReference type="EMBL" id="M85241">
    <property type="protein sequence ID" value="AAA27077.1"/>
    <property type="molecule type" value="Genomic_DNA"/>
</dbReference>
<dbReference type="EMBL" id="AE006468">
    <property type="protein sequence ID" value="AAL20873.1"/>
    <property type="molecule type" value="Genomic_DNA"/>
</dbReference>
<dbReference type="RefSeq" id="NP_460914.1">
    <property type="nucleotide sequence ID" value="NC_003197.2"/>
</dbReference>
<dbReference type="RefSeq" id="WP_000287764.1">
    <property type="nucleotide sequence ID" value="NC_003197.2"/>
</dbReference>
<dbReference type="PDB" id="6CH3">
    <property type="method" value="X-ray"/>
    <property type="resolution" value="2.68 A"/>
    <property type="chains" value="B=1-135"/>
</dbReference>
<dbReference type="PDBsum" id="6CH3"/>
<dbReference type="SMR" id="P26609"/>
<dbReference type="IntAct" id="P26609">
    <property type="interactions" value="2"/>
</dbReference>
<dbReference type="MINT" id="P26609"/>
<dbReference type="STRING" id="99287.STM1961"/>
<dbReference type="PaxDb" id="99287-STM1961"/>
<dbReference type="GeneID" id="1253482"/>
<dbReference type="KEGG" id="stm:STM1961"/>
<dbReference type="PATRIC" id="fig|99287.12.peg.2077"/>
<dbReference type="HOGENOM" id="CLU_080373_1_0_6"/>
<dbReference type="OMA" id="EFRDTWK"/>
<dbReference type="PhylomeDB" id="P26609"/>
<dbReference type="BioCyc" id="SENT99287:STM1961-MONOMER"/>
<dbReference type="Proteomes" id="UP000001014">
    <property type="component" value="Chromosome"/>
</dbReference>
<dbReference type="GO" id="GO:0005829">
    <property type="term" value="C:cytosol"/>
    <property type="evidence" value="ECO:0007669"/>
    <property type="project" value="UniProtKB-SubCell"/>
</dbReference>
<dbReference type="GO" id="GO:0044780">
    <property type="term" value="P:bacterial-type flagellum assembly"/>
    <property type="evidence" value="ECO:0007669"/>
    <property type="project" value="InterPro"/>
</dbReference>
<dbReference type="GO" id="GO:0071973">
    <property type="term" value="P:bacterial-type flagellum-dependent cell motility"/>
    <property type="evidence" value="ECO:0000318"/>
    <property type="project" value="GO_Central"/>
</dbReference>
<dbReference type="CDD" id="cd16098">
    <property type="entry name" value="FliS"/>
    <property type="match status" value="1"/>
</dbReference>
<dbReference type="FunFam" id="1.20.120.340:FF:000001">
    <property type="entry name" value="Flagellar secretion chaperone FliS"/>
    <property type="match status" value="1"/>
</dbReference>
<dbReference type="Gene3D" id="1.20.120.340">
    <property type="entry name" value="Flagellar protein FliS"/>
    <property type="match status" value="1"/>
</dbReference>
<dbReference type="InterPro" id="IPR003713">
    <property type="entry name" value="FliS"/>
</dbReference>
<dbReference type="InterPro" id="IPR036584">
    <property type="entry name" value="FliS_sf"/>
</dbReference>
<dbReference type="NCBIfam" id="TIGR00208">
    <property type="entry name" value="fliS"/>
    <property type="match status" value="1"/>
</dbReference>
<dbReference type="PANTHER" id="PTHR34773">
    <property type="entry name" value="FLAGELLAR SECRETION CHAPERONE FLIS"/>
    <property type="match status" value="1"/>
</dbReference>
<dbReference type="PANTHER" id="PTHR34773:SF1">
    <property type="entry name" value="FLAGELLAR SECRETION CHAPERONE FLIS"/>
    <property type="match status" value="1"/>
</dbReference>
<dbReference type="Pfam" id="PF02561">
    <property type="entry name" value="FliS"/>
    <property type="match status" value="1"/>
</dbReference>
<dbReference type="PIRSF" id="PIRSF039090">
    <property type="entry name" value="Flis"/>
    <property type="match status" value="1"/>
</dbReference>
<dbReference type="SUPFAM" id="SSF101116">
    <property type="entry name" value="Flagellar export chaperone FliS"/>
    <property type="match status" value="1"/>
</dbReference>